<dbReference type="EC" id="5.3.1.23" evidence="1"/>
<dbReference type="EMBL" id="CP000127">
    <property type="protein sequence ID" value="ABA58751.1"/>
    <property type="molecule type" value="Genomic_DNA"/>
</dbReference>
<dbReference type="RefSeq" id="WP_002808874.1">
    <property type="nucleotide sequence ID" value="NC_007484.1"/>
</dbReference>
<dbReference type="SMR" id="Q3J8U5"/>
<dbReference type="STRING" id="323261.Noc_2293"/>
<dbReference type="KEGG" id="noc:Noc_2293"/>
<dbReference type="eggNOG" id="COG0182">
    <property type="taxonomic scope" value="Bacteria"/>
</dbReference>
<dbReference type="HOGENOM" id="CLU_016218_1_2_6"/>
<dbReference type="InParanoid" id="Q3J8U5"/>
<dbReference type="UniPathway" id="UPA00904">
    <property type="reaction ID" value="UER00874"/>
</dbReference>
<dbReference type="Proteomes" id="UP000006838">
    <property type="component" value="Chromosome"/>
</dbReference>
<dbReference type="GO" id="GO:0046523">
    <property type="term" value="F:S-methyl-5-thioribose-1-phosphate isomerase activity"/>
    <property type="evidence" value="ECO:0007669"/>
    <property type="project" value="UniProtKB-UniRule"/>
</dbReference>
<dbReference type="GO" id="GO:0019509">
    <property type="term" value="P:L-methionine salvage from methylthioadenosine"/>
    <property type="evidence" value="ECO:0007669"/>
    <property type="project" value="UniProtKB-UniRule"/>
</dbReference>
<dbReference type="FunFam" id="1.20.120.420:FF:000003">
    <property type="entry name" value="Methylthioribose-1-phosphate isomerase"/>
    <property type="match status" value="1"/>
</dbReference>
<dbReference type="FunFam" id="3.40.50.10470:FF:000006">
    <property type="entry name" value="Methylthioribose-1-phosphate isomerase"/>
    <property type="match status" value="1"/>
</dbReference>
<dbReference type="Gene3D" id="1.20.120.420">
    <property type="entry name" value="translation initiation factor eif-2b, domain 1"/>
    <property type="match status" value="1"/>
</dbReference>
<dbReference type="Gene3D" id="3.40.50.10470">
    <property type="entry name" value="Translation initiation factor eif-2b, domain 2"/>
    <property type="match status" value="1"/>
</dbReference>
<dbReference type="HAMAP" id="MF_01678">
    <property type="entry name" value="Salvage_MtnA"/>
    <property type="match status" value="1"/>
</dbReference>
<dbReference type="InterPro" id="IPR000649">
    <property type="entry name" value="IF-2B-related"/>
</dbReference>
<dbReference type="InterPro" id="IPR005251">
    <property type="entry name" value="IF-M1Pi"/>
</dbReference>
<dbReference type="InterPro" id="IPR042529">
    <property type="entry name" value="IF_2B-like_C"/>
</dbReference>
<dbReference type="InterPro" id="IPR011559">
    <property type="entry name" value="Initiation_fac_2B_a/b/d"/>
</dbReference>
<dbReference type="InterPro" id="IPR027363">
    <property type="entry name" value="M1Pi_N"/>
</dbReference>
<dbReference type="InterPro" id="IPR037171">
    <property type="entry name" value="NagB/RpiA_transferase-like"/>
</dbReference>
<dbReference type="NCBIfam" id="TIGR00524">
    <property type="entry name" value="eIF-2B_rel"/>
    <property type="match status" value="1"/>
</dbReference>
<dbReference type="NCBIfam" id="NF004326">
    <property type="entry name" value="PRK05720.1"/>
    <property type="match status" value="1"/>
</dbReference>
<dbReference type="NCBIfam" id="TIGR00512">
    <property type="entry name" value="salvage_mtnA"/>
    <property type="match status" value="1"/>
</dbReference>
<dbReference type="PANTHER" id="PTHR43475">
    <property type="entry name" value="METHYLTHIORIBOSE-1-PHOSPHATE ISOMERASE"/>
    <property type="match status" value="1"/>
</dbReference>
<dbReference type="PANTHER" id="PTHR43475:SF1">
    <property type="entry name" value="METHYLTHIORIBOSE-1-PHOSPHATE ISOMERASE"/>
    <property type="match status" value="1"/>
</dbReference>
<dbReference type="Pfam" id="PF01008">
    <property type="entry name" value="IF-2B"/>
    <property type="match status" value="1"/>
</dbReference>
<dbReference type="SUPFAM" id="SSF100950">
    <property type="entry name" value="NagB/RpiA/CoA transferase-like"/>
    <property type="match status" value="1"/>
</dbReference>
<organism>
    <name type="scientific">Nitrosococcus oceani (strain ATCC 19707 / BCRC 17464 / JCM 30415 / NCIMB 11848 / C-107)</name>
    <dbReference type="NCBI Taxonomy" id="323261"/>
    <lineage>
        <taxon>Bacteria</taxon>
        <taxon>Pseudomonadati</taxon>
        <taxon>Pseudomonadota</taxon>
        <taxon>Gammaproteobacteria</taxon>
        <taxon>Chromatiales</taxon>
        <taxon>Chromatiaceae</taxon>
        <taxon>Nitrosococcus</taxon>
    </lineage>
</organism>
<sequence>MSAEHDQIRAVAWTGAGVRLLDQRRLPQEEIYWTIACVSDVAQAITKMVVRGAPAIGIAAAYGVVLAARARFSEAGSGWKQLLEADLCDLEAARPTAINLAWALARMQAIIQGLPDHRDPESALLVEARCIHEEDIAANRRMGELGTTLIEGSVGVLTHCNTGSLATGGFGTALGVIRHAYGKGRIEKVFADETRPWLQGARLTTWELLRDGIPVVLIADSVAPYLLGQGEVQWVIVGADRIAANGDTANKIGSYGLAVAARYHNVRFMVVAPTSTIDWNLSDGTRIPIEQRPPEEVLTLGGKAIATVGAEAYNPAFDVIPAHLIDAIVTERGVVRQPTHERMKALFG</sequence>
<evidence type="ECO:0000255" key="1">
    <source>
        <dbReference type="HAMAP-Rule" id="MF_01678"/>
    </source>
</evidence>
<evidence type="ECO:0000305" key="2"/>
<protein>
    <recommendedName>
        <fullName evidence="1">Methylthioribose-1-phosphate isomerase</fullName>
        <shortName evidence="1">M1Pi</shortName>
        <shortName evidence="1">MTR-1-P isomerase</shortName>
        <ecNumber evidence="1">5.3.1.23</ecNumber>
    </recommendedName>
    <alternativeName>
        <fullName evidence="1">S-methyl-5-thioribose-1-phosphate isomerase</fullName>
    </alternativeName>
</protein>
<reference key="1">
    <citation type="journal article" date="2006" name="Appl. Environ. Microbiol.">
        <title>Complete genome sequence of the marine, chemolithoautotrophic, ammonia-oxidizing bacterium Nitrosococcus oceani ATCC 19707.</title>
        <authorList>
            <person name="Klotz M.G."/>
            <person name="Arp D.J."/>
            <person name="Chain P.S.G."/>
            <person name="El-Sheikh A.F."/>
            <person name="Hauser L.J."/>
            <person name="Hommes N.G."/>
            <person name="Larimer F.W."/>
            <person name="Malfatti S.A."/>
            <person name="Norton J.M."/>
            <person name="Poret-Peterson A.T."/>
            <person name="Vergez L.M."/>
            <person name="Ward B.B."/>
        </authorList>
    </citation>
    <scope>NUCLEOTIDE SEQUENCE [LARGE SCALE GENOMIC DNA]</scope>
    <source>
        <strain>ATCC 19707 / BCRC 17464 / JCM 30415 / NCIMB 11848 / C-107</strain>
    </source>
</reference>
<gene>
    <name evidence="1" type="primary">mtnA</name>
    <name type="ordered locus">Noc_2293</name>
</gene>
<accession>Q3J8U5</accession>
<keyword id="KW-0028">Amino-acid biosynthesis</keyword>
<keyword id="KW-0413">Isomerase</keyword>
<keyword id="KW-0486">Methionine biosynthesis</keyword>
<keyword id="KW-1185">Reference proteome</keyword>
<feature type="chain" id="PRO_0000357210" description="Methylthioribose-1-phosphate isomerase">
    <location>
        <begin position="1"/>
        <end position="348"/>
    </location>
</feature>
<feature type="active site" description="Proton donor" evidence="1">
    <location>
        <position position="240"/>
    </location>
</feature>
<feature type="binding site" evidence="1">
    <location>
        <begin position="51"/>
        <end position="53"/>
    </location>
    <ligand>
        <name>substrate</name>
    </ligand>
</feature>
<feature type="binding site" evidence="1">
    <location>
        <position position="94"/>
    </location>
    <ligand>
        <name>substrate</name>
    </ligand>
</feature>
<feature type="binding site" evidence="1">
    <location>
        <position position="199"/>
    </location>
    <ligand>
        <name>substrate</name>
    </ligand>
</feature>
<feature type="binding site" evidence="1">
    <location>
        <begin position="250"/>
        <end position="251"/>
    </location>
    <ligand>
        <name>substrate</name>
    </ligand>
</feature>
<feature type="site" description="Transition state stabilizer" evidence="1">
    <location>
        <position position="160"/>
    </location>
</feature>
<name>MTNA_NITOC</name>
<comment type="function">
    <text evidence="1">Catalyzes the interconversion of methylthioribose-1-phosphate (MTR-1-P) into methylthioribulose-1-phosphate (MTRu-1-P).</text>
</comment>
<comment type="catalytic activity">
    <reaction evidence="1">
        <text>5-(methylsulfanyl)-alpha-D-ribose 1-phosphate = 5-(methylsulfanyl)-D-ribulose 1-phosphate</text>
        <dbReference type="Rhea" id="RHEA:19989"/>
        <dbReference type="ChEBI" id="CHEBI:58533"/>
        <dbReference type="ChEBI" id="CHEBI:58548"/>
        <dbReference type="EC" id="5.3.1.23"/>
    </reaction>
</comment>
<comment type="pathway">
    <text evidence="1">Amino-acid biosynthesis; L-methionine biosynthesis via salvage pathway; L-methionine from S-methyl-5-thio-alpha-D-ribose 1-phosphate: step 1/6.</text>
</comment>
<comment type="similarity">
    <text evidence="2">Belongs to the eIF-2B alpha/beta/delta subunits family. MtnA subfamily.</text>
</comment>
<proteinExistence type="inferred from homology"/>